<organism>
    <name type="scientific">Geobacter metallireducens (strain ATCC 53774 / DSM 7210 / GS-15)</name>
    <dbReference type="NCBI Taxonomy" id="269799"/>
    <lineage>
        <taxon>Bacteria</taxon>
        <taxon>Pseudomonadati</taxon>
        <taxon>Thermodesulfobacteriota</taxon>
        <taxon>Desulfuromonadia</taxon>
        <taxon>Geobacterales</taxon>
        <taxon>Geobacteraceae</taxon>
        <taxon>Geobacter</taxon>
    </lineage>
</organism>
<reference key="1">
    <citation type="journal article" date="2009" name="BMC Microbiol.">
        <title>The genome sequence of Geobacter metallireducens: features of metabolism, physiology and regulation common and dissimilar to Geobacter sulfurreducens.</title>
        <authorList>
            <person name="Aklujkar M."/>
            <person name="Krushkal J."/>
            <person name="DiBartolo G."/>
            <person name="Lapidus A."/>
            <person name="Land M.L."/>
            <person name="Lovley D.R."/>
        </authorList>
    </citation>
    <scope>NUCLEOTIDE SEQUENCE [LARGE SCALE GENOMIC DNA]</scope>
    <source>
        <strain>ATCC 53774 / DSM 7210 / GS-15</strain>
    </source>
</reference>
<accession>Q39Z32</accession>
<keyword id="KW-0028">Amino-acid biosynthesis</keyword>
<keyword id="KW-0368">Histidine biosynthesis</keyword>
<keyword id="KW-0378">Hydrolase</keyword>
<keyword id="KW-0486">Methionine biosynthesis</keyword>
<keyword id="KW-0511">Multifunctional enzyme</keyword>
<keyword id="KW-0521">NADP</keyword>
<keyword id="KW-0554">One-carbon metabolism</keyword>
<keyword id="KW-0560">Oxidoreductase</keyword>
<keyword id="KW-0658">Purine biosynthesis</keyword>
<keyword id="KW-1185">Reference proteome</keyword>
<dbReference type="EC" id="1.5.1.5" evidence="1"/>
<dbReference type="EC" id="3.5.4.9" evidence="1"/>
<dbReference type="EMBL" id="CP000148">
    <property type="protein sequence ID" value="ABB30492.1"/>
    <property type="molecule type" value="Genomic_DNA"/>
</dbReference>
<dbReference type="RefSeq" id="WP_004513563.1">
    <property type="nucleotide sequence ID" value="NC_007517.1"/>
</dbReference>
<dbReference type="SMR" id="Q39Z32"/>
<dbReference type="STRING" id="269799.Gmet_0247"/>
<dbReference type="KEGG" id="gme:Gmet_0247"/>
<dbReference type="eggNOG" id="COG0190">
    <property type="taxonomic scope" value="Bacteria"/>
</dbReference>
<dbReference type="HOGENOM" id="CLU_034045_2_1_7"/>
<dbReference type="UniPathway" id="UPA00193"/>
<dbReference type="Proteomes" id="UP000007073">
    <property type="component" value="Chromosome"/>
</dbReference>
<dbReference type="GO" id="GO:0005829">
    <property type="term" value="C:cytosol"/>
    <property type="evidence" value="ECO:0007669"/>
    <property type="project" value="TreeGrafter"/>
</dbReference>
<dbReference type="GO" id="GO:0004477">
    <property type="term" value="F:methenyltetrahydrofolate cyclohydrolase activity"/>
    <property type="evidence" value="ECO:0007669"/>
    <property type="project" value="UniProtKB-UniRule"/>
</dbReference>
<dbReference type="GO" id="GO:0004488">
    <property type="term" value="F:methylenetetrahydrofolate dehydrogenase (NADP+) activity"/>
    <property type="evidence" value="ECO:0007669"/>
    <property type="project" value="UniProtKB-UniRule"/>
</dbReference>
<dbReference type="GO" id="GO:0000105">
    <property type="term" value="P:L-histidine biosynthetic process"/>
    <property type="evidence" value="ECO:0007669"/>
    <property type="project" value="UniProtKB-KW"/>
</dbReference>
<dbReference type="GO" id="GO:0009086">
    <property type="term" value="P:methionine biosynthetic process"/>
    <property type="evidence" value="ECO:0007669"/>
    <property type="project" value="UniProtKB-KW"/>
</dbReference>
<dbReference type="GO" id="GO:0006164">
    <property type="term" value="P:purine nucleotide biosynthetic process"/>
    <property type="evidence" value="ECO:0007669"/>
    <property type="project" value="UniProtKB-KW"/>
</dbReference>
<dbReference type="GO" id="GO:0035999">
    <property type="term" value="P:tetrahydrofolate interconversion"/>
    <property type="evidence" value="ECO:0007669"/>
    <property type="project" value="UniProtKB-UniRule"/>
</dbReference>
<dbReference type="CDD" id="cd01080">
    <property type="entry name" value="NAD_bind_m-THF_DH_Cyclohyd"/>
    <property type="match status" value="1"/>
</dbReference>
<dbReference type="FunFam" id="3.40.50.720:FF:000094">
    <property type="entry name" value="Bifunctional protein FolD"/>
    <property type="match status" value="1"/>
</dbReference>
<dbReference type="FunFam" id="3.40.50.10860:FF:000005">
    <property type="entry name" value="C-1-tetrahydrofolate synthase, cytoplasmic, putative"/>
    <property type="match status" value="1"/>
</dbReference>
<dbReference type="Gene3D" id="3.40.50.10860">
    <property type="entry name" value="Leucine Dehydrogenase, chain A, domain 1"/>
    <property type="match status" value="1"/>
</dbReference>
<dbReference type="Gene3D" id="3.40.50.720">
    <property type="entry name" value="NAD(P)-binding Rossmann-like Domain"/>
    <property type="match status" value="1"/>
</dbReference>
<dbReference type="HAMAP" id="MF_01576">
    <property type="entry name" value="THF_DHG_CYH"/>
    <property type="match status" value="1"/>
</dbReference>
<dbReference type="InterPro" id="IPR046346">
    <property type="entry name" value="Aminoacid_DH-like_N_sf"/>
</dbReference>
<dbReference type="InterPro" id="IPR036291">
    <property type="entry name" value="NAD(P)-bd_dom_sf"/>
</dbReference>
<dbReference type="InterPro" id="IPR000672">
    <property type="entry name" value="THF_DH/CycHdrlase"/>
</dbReference>
<dbReference type="InterPro" id="IPR020630">
    <property type="entry name" value="THF_DH/CycHdrlase_cat_dom"/>
</dbReference>
<dbReference type="InterPro" id="IPR020867">
    <property type="entry name" value="THF_DH/CycHdrlase_CS"/>
</dbReference>
<dbReference type="InterPro" id="IPR020631">
    <property type="entry name" value="THF_DH/CycHdrlase_NAD-bd_dom"/>
</dbReference>
<dbReference type="PANTHER" id="PTHR48099:SF5">
    <property type="entry name" value="C-1-TETRAHYDROFOLATE SYNTHASE, CYTOPLASMIC"/>
    <property type="match status" value="1"/>
</dbReference>
<dbReference type="PANTHER" id="PTHR48099">
    <property type="entry name" value="C-1-TETRAHYDROFOLATE SYNTHASE, CYTOPLASMIC-RELATED"/>
    <property type="match status" value="1"/>
</dbReference>
<dbReference type="Pfam" id="PF00763">
    <property type="entry name" value="THF_DHG_CYH"/>
    <property type="match status" value="1"/>
</dbReference>
<dbReference type="Pfam" id="PF02882">
    <property type="entry name" value="THF_DHG_CYH_C"/>
    <property type="match status" value="1"/>
</dbReference>
<dbReference type="PRINTS" id="PR00085">
    <property type="entry name" value="THFDHDRGNASE"/>
</dbReference>
<dbReference type="SUPFAM" id="SSF53223">
    <property type="entry name" value="Aminoacid dehydrogenase-like, N-terminal domain"/>
    <property type="match status" value="1"/>
</dbReference>
<dbReference type="SUPFAM" id="SSF51735">
    <property type="entry name" value="NAD(P)-binding Rossmann-fold domains"/>
    <property type="match status" value="1"/>
</dbReference>
<dbReference type="PROSITE" id="PS00766">
    <property type="entry name" value="THF_DHG_CYH_1"/>
    <property type="match status" value="1"/>
</dbReference>
<feature type="chain" id="PRO_0000268358" description="Bifunctional protein FolD 1">
    <location>
        <begin position="1"/>
        <end position="290"/>
    </location>
</feature>
<feature type="binding site" evidence="1">
    <location>
        <begin position="164"/>
        <end position="166"/>
    </location>
    <ligand>
        <name>NADP(+)</name>
        <dbReference type="ChEBI" id="CHEBI:58349"/>
    </ligand>
</feature>
<feature type="binding site" evidence="1">
    <location>
        <position position="193"/>
    </location>
    <ligand>
        <name>NADP(+)</name>
        <dbReference type="ChEBI" id="CHEBI:58349"/>
    </ligand>
</feature>
<feature type="binding site" evidence="1">
    <location>
        <position position="236"/>
    </location>
    <ligand>
        <name>NADP(+)</name>
        <dbReference type="ChEBI" id="CHEBI:58349"/>
    </ligand>
</feature>
<gene>
    <name evidence="1" type="primary">folD1</name>
    <name type="ordered locus">Gmet_0247</name>
</gene>
<name>FOLD1_GEOMG</name>
<proteinExistence type="inferred from homology"/>
<evidence type="ECO:0000255" key="1">
    <source>
        <dbReference type="HAMAP-Rule" id="MF_01576"/>
    </source>
</evidence>
<sequence>MKLLDGKKCAESLVADIARKVAGYEESGLRKPHMTVILVGEHAPSESYVKSKIKSCGNAGFEGTLLRFPDTITEAELLEKIRGINADPTTDGLIVQLPLPRHINQQHIINAIAPEKDIDGFHPTNFGRMTLGQKAFRPATAYGICKLLQFYEIPVWGKHCVVIGRSNIVGKPISIMLSNDFDIGNATVTLTHIETPRELLLDETRRADIVIVAVGIPGFVTEDMVKEGVVVIDVGINRLEDGKIVGDVDFENVKKKCSWITPVPGGVGRMTVAALMINTLMAYQNNFDLV</sequence>
<comment type="function">
    <text evidence="1">Catalyzes the oxidation of 5,10-methylenetetrahydrofolate to 5,10-methenyltetrahydrofolate and then the hydrolysis of 5,10-methenyltetrahydrofolate to 10-formyltetrahydrofolate.</text>
</comment>
<comment type="catalytic activity">
    <reaction evidence="1">
        <text>(6R)-5,10-methylene-5,6,7,8-tetrahydrofolate + NADP(+) = (6R)-5,10-methenyltetrahydrofolate + NADPH</text>
        <dbReference type="Rhea" id="RHEA:22812"/>
        <dbReference type="ChEBI" id="CHEBI:15636"/>
        <dbReference type="ChEBI" id="CHEBI:57455"/>
        <dbReference type="ChEBI" id="CHEBI:57783"/>
        <dbReference type="ChEBI" id="CHEBI:58349"/>
        <dbReference type="EC" id="1.5.1.5"/>
    </reaction>
</comment>
<comment type="catalytic activity">
    <reaction evidence="1">
        <text>(6R)-5,10-methenyltetrahydrofolate + H2O = (6R)-10-formyltetrahydrofolate + H(+)</text>
        <dbReference type="Rhea" id="RHEA:23700"/>
        <dbReference type="ChEBI" id="CHEBI:15377"/>
        <dbReference type="ChEBI" id="CHEBI:15378"/>
        <dbReference type="ChEBI" id="CHEBI:57455"/>
        <dbReference type="ChEBI" id="CHEBI:195366"/>
        <dbReference type="EC" id="3.5.4.9"/>
    </reaction>
</comment>
<comment type="pathway">
    <text evidence="1">One-carbon metabolism; tetrahydrofolate interconversion.</text>
</comment>
<comment type="subunit">
    <text evidence="1">Homodimer.</text>
</comment>
<comment type="similarity">
    <text evidence="1">Belongs to the tetrahydrofolate dehydrogenase/cyclohydrolase family.</text>
</comment>
<protein>
    <recommendedName>
        <fullName evidence="1">Bifunctional protein FolD 1</fullName>
    </recommendedName>
    <domain>
        <recommendedName>
            <fullName evidence="1">Methylenetetrahydrofolate dehydrogenase</fullName>
            <ecNumber evidence="1">1.5.1.5</ecNumber>
        </recommendedName>
    </domain>
    <domain>
        <recommendedName>
            <fullName evidence="1">Methenyltetrahydrofolate cyclohydrolase</fullName>
            <ecNumber evidence="1">3.5.4.9</ecNumber>
        </recommendedName>
    </domain>
</protein>